<name>GNRHR_OCTVU</name>
<comment type="function">
    <text evidence="1 5">Receptor for gonadotropin releasing hormone (GnRH) that mediates the action of GnRH to stimulate the secretion of the gonadotropic hormones luteinizing hormone (LH) and follicle-stimulating hormone (FSH). This receptor mediates its action by association with G-proteins that activate a phosphatidylinositol-calcium second messenger system. Ligand interaction triggers steroidogenesis in spermatozoa and follicles. Appears to be involved in contraction of the radula retractor muscle.</text>
</comment>
<comment type="subcellular location">
    <subcellularLocation>
        <location evidence="7">Cell membrane</location>
        <topology evidence="7">Multi-pass membrane protein</topology>
    </subcellularLocation>
</comment>
<comment type="tissue specificity">
    <text evidence="5">Widely expressed in peripheral nervous tissue, gonadal tissue and brain. In the brain, expression is high in the palliovisceral lobe and superior buccal lobe but low in the subvertical lobe, superior and inferior frontal lobe, posterior brachial lobe and pedal lobe. Expressed in stomach, rectum, aorta, heart, salivary gland, branchia, pancreas, radula retractor muscle, branchial vessel but not in white body, esophagus, liver and kidney.</text>
</comment>
<comment type="similarity">
    <text evidence="3">Belongs to the G-protein coupled receptor 1 family.</text>
</comment>
<organism>
    <name type="scientific">Octopus vulgaris</name>
    <name type="common">Common octopus</name>
    <dbReference type="NCBI Taxonomy" id="6645"/>
    <lineage>
        <taxon>Eukaryota</taxon>
        <taxon>Metazoa</taxon>
        <taxon>Spiralia</taxon>
        <taxon>Lophotrochozoa</taxon>
        <taxon>Mollusca</taxon>
        <taxon>Cephalopoda</taxon>
        <taxon>Coleoidea</taxon>
        <taxon>Octopodiformes</taxon>
        <taxon>Octopoda</taxon>
        <taxon>Incirrata</taxon>
        <taxon>Octopodidae</taxon>
        <taxon>Octopus</taxon>
    </lineage>
</organism>
<feature type="chain" id="PRO_0000389522" description="Gonadotropin-releasing hormone receptor">
    <location>
        <begin position="1"/>
        <end position="407"/>
    </location>
</feature>
<feature type="topological domain" description="Extracellular" evidence="2">
    <location>
        <begin position="1"/>
        <end position="36"/>
    </location>
</feature>
<feature type="transmembrane region" description="Helical; Name=1" evidence="2">
    <location>
        <begin position="37"/>
        <end position="57"/>
    </location>
</feature>
<feature type="topological domain" description="Cytoplasmic" evidence="2">
    <location>
        <begin position="58"/>
        <end position="69"/>
    </location>
</feature>
<feature type="transmembrane region" description="Helical; Name=2" evidence="2">
    <location>
        <begin position="70"/>
        <end position="90"/>
    </location>
</feature>
<feature type="topological domain" description="Extracellular" evidence="2">
    <location>
        <begin position="91"/>
        <end position="105"/>
    </location>
</feature>
<feature type="transmembrane region" description="Helical; Name=3" evidence="2">
    <location>
        <begin position="106"/>
        <end position="126"/>
    </location>
</feature>
<feature type="topological domain" description="Cytoplasmic" evidence="2">
    <location>
        <begin position="127"/>
        <end position="147"/>
    </location>
</feature>
<feature type="transmembrane region" description="Helical; Name=4" evidence="2">
    <location>
        <begin position="148"/>
        <end position="168"/>
    </location>
</feature>
<feature type="topological domain" description="Extracellular" evidence="2">
    <location>
        <begin position="169"/>
        <end position="199"/>
    </location>
</feature>
<feature type="transmembrane region" description="Helical; Name=5" evidence="2">
    <location>
        <begin position="200"/>
        <end position="220"/>
    </location>
</feature>
<feature type="topological domain" description="Cytoplasmic" evidence="2">
    <location>
        <begin position="221"/>
        <end position="268"/>
    </location>
</feature>
<feature type="transmembrane region" description="Helical; Name=6" evidence="2">
    <location>
        <begin position="269"/>
        <end position="289"/>
    </location>
</feature>
<feature type="topological domain" description="Extracellular" evidence="2">
    <location>
        <begin position="290"/>
        <end position="298"/>
    </location>
</feature>
<feature type="transmembrane region" description="Helical; Name=7" evidence="2">
    <location>
        <begin position="299"/>
        <end position="319"/>
    </location>
</feature>
<feature type="topological domain" description="Cytoplasmic" evidence="2">
    <location>
        <begin position="320"/>
        <end position="407"/>
    </location>
</feature>
<feature type="region of interest" description="Disordered" evidence="4">
    <location>
        <begin position="377"/>
        <end position="407"/>
    </location>
</feature>
<feature type="glycosylation site" description="N-linked (GlcNAc...) asparagine" evidence="2">
    <location>
        <position position="5"/>
    </location>
</feature>
<feature type="glycosylation site" description="N-linked (GlcNAc...) asparagine" evidence="2">
    <location>
        <position position="11"/>
    </location>
</feature>
<feature type="glycosylation site" description="N-linked (GlcNAc...) asparagine" evidence="2">
    <location>
        <position position="15"/>
    </location>
</feature>
<feature type="disulfide bond" evidence="3">
    <location>
        <begin position="104"/>
        <end position="183"/>
    </location>
</feature>
<evidence type="ECO:0000250" key="1">
    <source>
        <dbReference type="UniProtKB" id="P30969"/>
    </source>
</evidence>
<evidence type="ECO:0000255" key="2"/>
<evidence type="ECO:0000255" key="3">
    <source>
        <dbReference type="PROSITE-ProRule" id="PRU00521"/>
    </source>
</evidence>
<evidence type="ECO:0000256" key="4">
    <source>
        <dbReference type="SAM" id="MobiDB-lite"/>
    </source>
</evidence>
<evidence type="ECO:0000269" key="5">
    <source>
    </source>
</evidence>
<evidence type="ECO:0000303" key="6">
    <source>
    </source>
</evidence>
<evidence type="ECO:0000305" key="7"/>
<evidence type="ECO:0000312" key="8">
    <source>
        <dbReference type="EMBL" id="BAE66647.1"/>
    </source>
</evidence>
<evidence type="ECO:0000312" key="9">
    <source>
        <dbReference type="EMBL" id="BAE66648.1"/>
    </source>
</evidence>
<gene>
    <name evidence="1" type="primary">GNRHR</name>
</gene>
<keyword id="KW-1003">Cell membrane</keyword>
<keyword id="KW-1015">Disulfide bond</keyword>
<keyword id="KW-0297">G-protein coupled receptor</keyword>
<keyword id="KW-0325">Glycoprotein</keyword>
<keyword id="KW-0472">Membrane</keyword>
<keyword id="KW-0675">Receptor</keyword>
<keyword id="KW-1185">Reference proteome</keyword>
<keyword id="KW-0807">Transducer</keyword>
<keyword id="KW-0812">Transmembrane</keyword>
<keyword id="KW-1133">Transmembrane helix</keyword>
<accession>Q2V2K5</accession>
<reference evidence="7 8" key="1">
    <citation type="journal article" date="2006" name="Biochem. J.">
        <title>Molecular and functional characterization of a novel gonadotropin-releasing-hormone receptor isolated from the common octopus (Octopus vulgaris).</title>
        <authorList>
            <person name="Kanda A."/>
            <person name="Takahashi T."/>
            <person name="Satake H."/>
            <person name="Minakata H."/>
        </authorList>
    </citation>
    <scope>NUCLEOTIDE SEQUENCE [GENOMIC DNA / MRNA]</scope>
    <scope>FUNCTION</scope>
    <scope>TISSUE SPECIFICITY</scope>
    <source>
        <tissue evidence="8">Brain</tissue>
    </source>
</reference>
<dbReference type="EMBL" id="AB185200">
    <property type="protein sequence ID" value="BAE66647.1"/>
    <property type="molecule type" value="mRNA"/>
</dbReference>
<dbReference type="EMBL" id="AB185201">
    <property type="protein sequence ID" value="BAE66648.1"/>
    <property type="molecule type" value="Genomic_DNA"/>
</dbReference>
<dbReference type="SMR" id="Q2V2K5"/>
<dbReference type="GlyCosmos" id="Q2V2K5">
    <property type="glycosylation" value="3 sites, No reported glycans"/>
</dbReference>
<dbReference type="Proteomes" id="UP000515154">
    <property type="component" value="Unplaced"/>
</dbReference>
<dbReference type="GO" id="GO:0005886">
    <property type="term" value="C:plasma membrane"/>
    <property type="evidence" value="ECO:0007669"/>
    <property type="project" value="UniProtKB-SubCell"/>
</dbReference>
<dbReference type="GO" id="GO:0004930">
    <property type="term" value="F:G protein-coupled receptor activity"/>
    <property type="evidence" value="ECO:0007669"/>
    <property type="project" value="UniProtKB-KW"/>
</dbReference>
<dbReference type="GO" id="GO:0042277">
    <property type="term" value="F:peptide binding"/>
    <property type="evidence" value="ECO:0007669"/>
    <property type="project" value="TreeGrafter"/>
</dbReference>
<dbReference type="GO" id="GO:0032870">
    <property type="term" value="P:cellular response to hormone stimulus"/>
    <property type="evidence" value="ECO:0007669"/>
    <property type="project" value="TreeGrafter"/>
</dbReference>
<dbReference type="Gene3D" id="1.20.1070.10">
    <property type="entry name" value="Rhodopsin 7-helix transmembrane proteins"/>
    <property type="match status" value="1"/>
</dbReference>
<dbReference type="InterPro" id="IPR000276">
    <property type="entry name" value="GPCR_Rhodpsn"/>
</dbReference>
<dbReference type="InterPro" id="IPR017452">
    <property type="entry name" value="GPCR_Rhodpsn_7TM"/>
</dbReference>
<dbReference type="PANTHER" id="PTHR24241:SF59">
    <property type="entry name" value="ADIPOKINETIC HORMONE RECEPTOR, ISOFORM C"/>
    <property type="match status" value="1"/>
</dbReference>
<dbReference type="PANTHER" id="PTHR24241">
    <property type="entry name" value="NEUROPEPTIDE RECEPTOR-RELATED G-PROTEIN COUPLED RECEPTOR"/>
    <property type="match status" value="1"/>
</dbReference>
<dbReference type="Pfam" id="PF00001">
    <property type="entry name" value="7tm_1"/>
    <property type="match status" value="1"/>
</dbReference>
<dbReference type="PRINTS" id="PR00237">
    <property type="entry name" value="GPCRRHODOPSN"/>
</dbReference>
<dbReference type="SUPFAM" id="SSF81321">
    <property type="entry name" value="Family A G protein-coupled receptor-like"/>
    <property type="match status" value="1"/>
</dbReference>
<dbReference type="PROSITE" id="PS50262">
    <property type="entry name" value="G_PROTEIN_RECEP_F1_2"/>
    <property type="match status" value="1"/>
</dbReference>
<proteinExistence type="evidence at transcript level"/>
<protein>
    <recommendedName>
        <fullName evidence="1">Gonadotropin-releasing hormone receptor</fullName>
        <shortName evidence="1 9">GnRH receptor</shortName>
        <shortName evidence="1">GnRH-R</shortName>
        <shortName evidence="6">oct-GnRHR</shortName>
    </recommendedName>
</protein>
<sequence>MDYLNDSMFNNMTYNITSTPLPDAPRFDNVYVSKLCVLGTVFVISFFGNTLVIIQIFRIRGSRSTIQSLILNLAIADLMVSFFNILMDIIWSATVEWLAGNTMCKIMKYLTVFGLHLSTYITVSIALDRCFAILSPMSRSKAPLRVRIMITMAWVLSAIFSIPQAVIFQEQRKMFRQGMFHQCRDSYNALWQKQLYSASSLILLFVIPLIIMVTSYLLILKTIVKTSRQFHDTPISPTSMSCYSVNHGQIRTHLFERARKRSSRMSAVIVAAFILCWTPYYIIFLGFAFFQWDNSRTVIYFFTLGTSNCMLNPLIYGAFTIYKVHRGRSGSANSPSGTRLMIMVNKRGRSTTTTTNRMSGSGRRQLTTGQTITQCASLTNPHQPVRPSPGINSTTSPNGKMPTKPPG</sequence>